<dbReference type="EMBL" id="AF089879">
    <property type="protein sequence ID" value="AAD55338.1"/>
    <property type="molecule type" value="Genomic_DNA"/>
</dbReference>
<dbReference type="GO" id="GO:0000786">
    <property type="term" value="C:nucleosome"/>
    <property type="evidence" value="ECO:0007669"/>
    <property type="project" value="UniProtKB-KW"/>
</dbReference>
<dbReference type="GO" id="GO:0005634">
    <property type="term" value="C:nucleus"/>
    <property type="evidence" value="ECO:0007669"/>
    <property type="project" value="UniProtKB-SubCell"/>
</dbReference>
<dbReference type="GO" id="GO:0003677">
    <property type="term" value="F:DNA binding"/>
    <property type="evidence" value="ECO:0007669"/>
    <property type="project" value="UniProtKB-KW"/>
</dbReference>
<dbReference type="GO" id="GO:0030261">
    <property type="term" value="P:chromosome condensation"/>
    <property type="evidence" value="ECO:0007669"/>
    <property type="project" value="UniProtKB-KW"/>
</dbReference>
<dbReference type="GO" id="GO:0035092">
    <property type="term" value="P:sperm DNA condensation"/>
    <property type="evidence" value="ECO:0007669"/>
    <property type="project" value="InterPro"/>
</dbReference>
<dbReference type="InterPro" id="IPR000221">
    <property type="entry name" value="Protamine_P1"/>
</dbReference>
<dbReference type="PROSITE" id="PS00048">
    <property type="entry name" value="PROTAMINE_P1"/>
    <property type="match status" value="1"/>
</dbReference>
<proteinExistence type="evidence at transcript level"/>
<keyword id="KW-0158">Chromosome</keyword>
<keyword id="KW-0217">Developmental protein</keyword>
<keyword id="KW-0221">Differentiation</keyword>
<keyword id="KW-0226">DNA condensation</keyword>
<keyword id="KW-0238">DNA-binding</keyword>
<keyword id="KW-0544">Nucleosome core</keyword>
<keyword id="KW-0539">Nucleus</keyword>
<keyword id="KW-0744">Spermatogenesis</keyword>
<accession>Q71UG3</accession>
<gene>
    <name type="primary">PRM1</name>
</gene>
<protein>
    <recommendedName>
        <fullName>Sperm protamine P1</fullName>
    </recommendedName>
</protein>
<organism>
    <name type="scientific">Sminthopsis hirtipes</name>
    <name type="common">Hairy-footed dunnart</name>
    <dbReference type="NCBI Taxonomy" id="90760"/>
    <lineage>
        <taxon>Eukaryota</taxon>
        <taxon>Metazoa</taxon>
        <taxon>Chordata</taxon>
        <taxon>Craniata</taxon>
        <taxon>Vertebrata</taxon>
        <taxon>Euteleostomi</taxon>
        <taxon>Mammalia</taxon>
        <taxon>Metatheria</taxon>
        <taxon>Dasyuromorphia</taxon>
        <taxon>Dasyuridae</taxon>
        <taxon>Sminthopsis</taxon>
    </lineage>
</organism>
<sequence>MARYRRHSRSRSRSRYRRRRRRRSRHHNRRRTYRRSRRHSRRRRGRRRGYSRRRYSRRGRRRY</sequence>
<name>HSP1_SMIHI</name>
<comment type="function">
    <text evidence="1">Protamines substitute for histones in the chromatin of sperm during the haploid phase of spermatogenesis. They compact sperm DNA into a highly condensed, stable and inactive complex (By similarity).</text>
</comment>
<comment type="subcellular location">
    <subcellularLocation>
        <location evidence="1">Nucleus</location>
    </subcellularLocation>
    <subcellularLocation>
        <location evidence="1">Chromosome</location>
    </subcellularLocation>
</comment>
<comment type="tissue specificity">
    <text>Testis.</text>
</comment>
<comment type="similarity">
    <text evidence="3">Belongs to the protamine P1 family.</text>
</comment>
<evidence type="ECO:0000250" key="1"/>
<evidence type="ECO:0000256" key="2">
    <source>
        <dbReference type="SAM" id="MobiDB-lite"/>
    </source>
</evidence>
<evidence type="ECO:0000305" key="3"/>
<feature type="chain" id="PRO_0000191567" description="Sperm protamine P1">
    <location>
        <begin position="1"/>
        <end position="63"/>
    </location>
</feature>
<feature type="region of interest" description="Disordered" evidence="2">
    <location>
        <begin position="1"/>
        <end position="63"/>
    </location>
</feature>
<reference key="1">
    <citation type="journal article" date="1999" name="Mol. Phylogenet. Evol.">
        <title>Systematic relationships within the dasyurid marsupial tribe Sminthopsini -- a multigene approach.</title>
        <authorList>
            <person name="Blacket M.J."/>
            <person name="Krajewski C."/>
            <person name="Labrinidis A."/>
            <person name="Cambron B."/>
            <person name="Cooper S."/>
            <person name="Westerman M."/>
        </authorList>
    </citation>
    <scope>NUCLEOTIDE SEQUENCE [GENOMIC DNA]</scope>
</reference>